<organism>
    <name type="scientific">Escherichia coli O45:K1 (strain S88 / ExPEC)</name>
    <dbReference type="NCBI Taxonomy" id="585035"/>
    <lineage>
        <taxon>Bacteria</taxon>
        <taxon>Pseudomonadati</taxon>
        <taxon>Pseudomonadota</taxon>
        <taxon>Gammaproteobacteria</taxon>
        <taxon>Enterobacterales</taxon>
        <taxon>Enterobacteriaceae</taxon>
        <taxon>Escherichia</taxon>
    </lineage>
</organism>
<gene>
    <name evidence="1" type="primary">kdgT</name>
    <name type="ordered locus">ECS88_4359</name>
</gene>
<dbReference type="EMBL" id="CU928161">
    <property type="protein sequence ID" value="CAR05540.1"/>
    <property type="molecule type" value="Genomic_DNA"/>
</dbReference>
<dbReference type="RefSeq" id="WP_001166063.1">
    <property type="nucleotide sequence ID" value="NC_011742.1"/>
</dbReference>
<dbReference type="GeneID" id="75204583"/>
<dbReference type="KEGG" id="ecz:ECS88_4359"/>
<dbReference type="HOGENOM" id="CLU_057476_0_1_6"/>
<dbReference type="Proteomes" id="UP000000747">
    <property type="component" value="Chromosome"/>
</dbReference>
<dbReference type="GO" id="GO:0005886">
    <property type="term" value="C:plasma membrane"/>
    <property type="evidence" value="ECO:0007669"/>
    <property type="project" value="UniProtKB-SubCell"/>
</dbReference>
<dbReference type="GO" id="GO:0015649">
    <property type="term" value="F:2-keto-3-deoxygluconate:proton symporter activity"/>
    <property type="evidence" value="ECO:0007669"/>
    <property type="project" value="UniProtKB-UniRule"/>
</dbReference>
<dbReference type="HAMAP" id="MF_00070">
    <property type="entry name" value="KdgT"/>
    <property type="match status" value="1"/>
</dbReference>
<dbReference type="InterPro" id="IPR004684">
    <property type="entry name" value="2keto-3dGluconate_permease"/>
</dbReference>
<dbReference type="InterPro" id="IPR018395">
    <property type="entry name" value="2keto-3dGluconate_permease_sub"/>
</dbReference>
<dbReference type="NCBIfam" id="TIGR00793">
    <property type="entry name" value="kdgT"/>
    <property type="match status" value="1"/>
</dbReference>
<dbReference type="Pfam" id="PF03812">
    <property type="entry name" value="KdgT"/>
    <property type="match status" value="1"/>
</dbReference>
<comment type="function">
    <text evidence="1">Catalyzes the proton-dependent uptake of 2-keto-3-deoxygluconate (KDG) into the cell.</text>
</comment>
<comment type="catalytic activity">
    <reaction evidence="1">
        <text>2-dehydro-3-deoxy-D-gluconate(in) + H(+)(in) = 2-dehydro-3-deoxy-D-gluconate(out) + H(+)(out)</text>
        <dbReference type="Rhea" id="RHEA:29943"/>
        <dbReference type="ChEBI" id="CHEBI:15378"/>
        <dbReference type="ChEBI" id="CHEBI:57990"/>
    </reaction>
    <physiologicalReaction direction="right-to-left" evidence="1">
        <dbReference type="Rhea" id="RHEA:29945"/>
    </physiologicalReaction>
</comment>
<comment type="subcellular location">
    <subcellularLocation>
        <location evidence="1">Cell inner membrane</location>
        <topology evidence="1">Multi-pass membrane protein</topology>
    </subcellularLocation>
</comment>
<comment type="similarity">
    <text evidence="1">Belongs to the KdgT transporter family.</text>
</comment>
<feature type="chain" id="PRO_1000117007" description="2-keto-3-deoxygluconate permease">
    <location>
        <begin position="1"/>
        <end position="327"/>
    </location>
</feature>
<feature type="transmembrane region" description="Helical" evidence="1">
    <location>
        <begin position="10"/>
        <end position="30"/>
    </location>
</feature>
<feature type="transmembrane region" description="Helical" evidence="1">
    <location>
        <begin position="42"/>
        <end position="62"/>
    </location>
</feature>
<feature type="transmembrane region" description="Helical" evidence="1">
    <location>
        <begin position="73"/>
        <end position="93"/>
    </location>
</feature>
<feature type="transmembrane region" description="Helical" evidence="1">
    <location>
        <begin position="95"/>
        <end position="115"/>
    </location>
</feature>
<feature type="transmembrane region" description="Helical" evidence="1">
    <location>
        <begin position="139"/>
        <end position="159"/>
    </location>
</feature>
<feature type="transmembrane region" description="Helical" evidence="1">
    <location>
        <begin position="163"/>
        <end position="183"/>
    </location>
</feature>
<feature type="transmembrane region" description="Helical" evidence="1">
    <location>
        <begin position="199"/>
        <end position="219"/>
    </location>
</feature>
<feature type="transmembrane region" description="Helical" evidence="1">
    <location>
        <begin position="224"/>
        <end position="244"/>
    </location>
</feature>
<feature type="transmembrane region" description="Helical" evidence="1">
    <location>
        <begin position="254"/>
        <end position="274"/>
    </location>
</feature>
<feature type="transmembrane region" description="Helical" evidence="1">
    <location>
        <begin position="289"/>
        <end position="309"/>
    </location>
</feature>
<reference key="1">
    <citation type="journal article" date="2009" name="PLoS Genet.">
        <title>Organised genome dynamics in the Escherichia coli species results in highly diverse adaptive paths.</title>
        <authorList>
            <person name="Touchon M."/>
            <person name="Hoede C."/>
            <person name="Tenaillon O."/>
            <person name="Barbe V."/>
            <person name="Baeriswyl S."/>
            <person name="Bidet P."/>
            <person name="Bingen E."/>
            <person name="Bonacorsi S."/>
            <person name="Bouchier C."/>
            <person name="Bouvet O."/>
            <person name="Calteau A."/>
            <person name="Chiapello H."/>
            <person name="Clermont O."/>
            <person name="Cruveiller S."/>
            <person name="Danchin A."/>
            <person name="Diard M."/>
            <person name="Dossat C."/>
            <person name="Karoui M.E."/>
            <person name="Frapy E."/>
            <person name="Garry L."/>
            <person name="Ghigo J.M."/>
            <person name="Gilles A.M."/>
            <person name="Johnson J."/>
            <person name="Le Bouguenec C."/>
            <person name="Lescat M."/>
            <person name="Mangenot S."/>
            <person name="Martinez-Jehanne V."/>
            <person name="Matic I."/>
            <person name="Nassif X."/>
            <person name="Oztas S."/>
            <person name="Petit M.A."/>
            <person name="Pichon C."/>
            <person name="Rouy Z."/>
            <person name="Ruf C.S."/>
            <person name="Schneider D."/>
            <person name="Tourret J."/>
            <person name="Vacherie B."/>
            <person name="Vallenet D."/>
            <person name="Medigue C."/>
            <person name="Rocha E.P.C."/>
            <person name="Denamur E."/>
        </authorList>
    </citation>
    <scope>NUCLEOTIDE SEQUENCE [LARGE SCALE GENOMIC DNA]</scope>
    <source>
        <strain>S88 / ExPEC</strain>
    </source>
</reference>
<sequence>MQIKRSIEKIPGGMMLVPLFLGALCHTFSPGAGKYFGSFTNGMITGTVPILAVWFFCMGASIKLSATGTVLRKSGTLVVTKIAVAWVVAAIASRIIPEHGVEVGFFAGLSTLALVAAMDMTNGGLYASIMQQYGTKEEAGAFVLMSLESGPLMTMIILGTAGIASFEPHVFVGAVLPFLVGFALGNLDPELREFFSKAVQTLIPFFAFALGNTIDLTVIAQTGLLGILLGVAVIIVTGIPLIIADKLIGGGDGTAGIAASSSAGAAVATPVLIAEMVPAFKPMAPAATSLVATAVIVTSILVPILTSIWSRKVKARAAKIEILGTVK</sequence>
<accession>B7MI42</accession>
<name>KDGT_ECO45</name>
<protein>
    <recommendedName>
        <fullName evidence="1">2-keto-3-deoxygluconate permease</fullName>
        <shortName evidence="1">KDG permease</shortName>
    </recommendedName>
</protein>
<proteinExistence type="inferred from homology"/>
<evidence type="ECO:0000255" key="1">
    <source>
        <dbReference type="HAMAP-Rule" id="MF_00070"/>
    </source>
</evidence>
<keyword id="KW-0997">Cell inner membrane</keyword>
<keyword id="KW-1003">Cell membrane</keyword>
<keyword id="KW-0472">Membrane</keyword>
<keyword id="KW-1185">Reference proteome</keyword>
<keyword id="KW-0762">Sugar transport</keyword>
<keyword id="KW-0769">Symport</keyword>
<keyword id="KW-0812">Transmembrane</keyword>
<keyword id="KW-1133">Transmembrane helix</keyword>
<keyword id="KW-0813">Transport</keyword>